<gene>
    <name evidence="1" type="primary">nhaA1</name>
    <name type="ordered locus">Oant_0515</name>
</gene>
<reference key="1">
    <citation type="journal article" date="2011" name="J. Bacteriol.">
        <title>Genome of Ochrobactrum anthropi ATCC 49188 T, a versatile opportunistic pathogen and symbiont of several eukaryotic hosts.</title>
        <authorList>
            <person name="Chain P.S."/>
            <person name="Lang D.M."/>
            <person name="Comerci D.J."/>
            <person name="Malfatti S.A."/>
            <person name="Vergez L.M."/>
            <person name="Shin M."/>
            <person name="Ugalde R.A."/>
            <person name="Garcia E."/>
            <person name="Tolmasky M.E."/>
        </authorList>
    </citation>
    <scope>NUCLEOTIDE SEQUENCE [LARGE SCALE GENOMIC DNA]</scope>
    <source>
        <strain>ATCC 49188 / DSM 6882 / CCUG 24695 / JCM 21032 / LMG 3331 / NBRC 15819 / NCTC 12168 / Alc 37</strain>
    </source>
</reference>
<protein>
    <recommendedName>
        <fullName evidence="1">Na(+)/H(+) antiporter NhaA 1</fullName>
    </recommendedName>
    <alternativeName>
        <fullName evidence="1">Sodium/proton antiporter NhaA 1</fullName>
    </alternativeName>
</protein>
<organism>
    <name type="scientific">Brucella anthropi (strain ATCC 49188 / DSM 6882 / CCUG 24695 / JCM 21032 / LMG 3331 / NBRC 15819 / NCTC 12168 / Alc 37)</name>
    <name type="common">Ochrobactrum anthropi</name>
    <dbReference type="NCBI Taxonomy" id="439375"/>
    <lineage>
        <taxon>Bacteria</taxon>
        <taxon>Pseudomonadati</taxon>
        <taxon>Pseudomonadota</taxon>
        <taxon>Alphaproteobacteria</taxon>
        <taxon>Hyphomicrobiales</taxon>
        <taxon>Brucellaceae</taxon>
        <taxon>Brucella/Ochrobactrum group</taxon>
        <taxon>Brucella</taxon>
    </lineage>
</organism>
<accession>A6WW92</accession>
<keyword id="KW-0050">Antiport</keyword>
<keyword id="KW-0997">Cell inner membrane</keyword>
<keyword id="KW-1003">Cell membrane</keyword>
<keyword id="KW-0406">Ion transport</keyword>
<keyword id="KW-0472">Membrane</keyword>
<keyword id="KW-1185">Reference proteome</keyword>
<keyword id="KW-0915">Sodium</keyword>
<keyword id="KW-0739">Sodium transport</keyword>
<keyword id="KW-0812">Transmembrane</keyword>
<keyword id="KW-1133">Transmembrane helix</keyword>
<keyword id="KW-0813">Transport</keyword>
<sequence>MNHSPNQSRPVSIMRRFLDSESAGGVSLMVAAALALIVANSPFSQAYFDILHTHIGPLSLTDWINDALMAVFFLLVGLEIKREFLDGQLASWPNRMLPGIAAAGGVILPAIIFTAFNWHDPAKVRGWAVPSATDIAFALGVLSLLGSRVPSSLKVFLATLAILDDLAAVVIIAIFYTAEISMPYLGGAFAAAIVLFVMNRMGVMKLLPYLIGGAALWFFVLNSGVHATVAGVVTALMIPLKAAPGRPDDMTSPLHVLEHALAKPVAFIIVPIFGFANAGISFAGLDASVMRDTLTLGIMLGLFIGKQLGVFGAAWLAIKTGLAQKPLGATWIQLYGVAVLCGIGFTMSIFIGLLSFPSDLMQAETKIGVLAGSGLSAICGYILLRLVTKPKNT</sequence>
<feature type="chain" id="PRO_0000334352" description="Na(+)/H(+) antiporter NhaA 1">
    <location>
        <begin position="1"/>
        <end position="393"/>
    </location>
</feature>
<feature type="transmembrane region" description="Helical" evidence="1">
    <location>
        <begin position="23"/>
        <end position="43"/>
    </location>
</feature>
<feature type="transmembrane region" description="Helical" evidence="1">
    <location>
        <begin position="58"/>
        <end position="78"/>
    </location>
</feature>
<feature type="transmembrane region" description="Helical" evidence="1">
    <location>
        <begin position="96"/>
        <end position="116"/>
    </location>
</feature>
<feature type="transmembrane region" description="Helical" evidence="1">
    <location>
        <begin position="126"/>
        <end position="146"/>
    </location>
</feature>
<feature type="transmembrane region" description="Helical" evidence="1">
    <location>
        <begin position="155"/>
        <end position="175"/>
    </location>
</feature>
<feature type="transmembrane region" description="Helical" evidence="1">
    <location>
        <begin position="178"/>
        <end position="198"/>
    </location>
</feature>
<feature type="transmembrane region" description="Helical" evidence="1">
    <location>
        <begin position="224"/>
        <end position="244"/>
    </location>
</feature>
<feature type="transmembrane region" description="Helical" evidence="1">
    <location>
        <begin position="265"/>
        <end position="285"/>
    </location>
</feature>
<feature type="transmembrane region" description="Helical" evidence="1">
    <location>
        <begin position="298"/>
        <end position="318"/>
    </location>
</feature>
<feature type="transmembrane region" description="Helical" evidence="1">
    <location>
        <begin position="334"/>
        <end position="354"/>
    </location>
</feature>
<feature type="transmembrane region" description="Helical" evidence="1">
    <location>
        <begin position="367"/>
        <end position="387"/>
    </location>
</feature>
<comment type="function">
    <text evidence="1">Na(+)/H(+) antiporter that extrudes sodium in exchange for external protons.</text>
</comment>
<comment type="catalytic activity">
    <reaction evidence="1">
        <text>Na(+)(in) + 2 H(+)(out) = Na(+)(out) + 2 H(+)(in)</text>
        <dbReference type="Rhea" id="RHEA:29251"/>
        <dbReference type="ChEBI" id="CHEBI:15378"/>
        <dbReference type="ChEBI" id="CHEBI:29101"/>
    </reaction>
    <physiologicalReaction direction="left-to-right" evidence="1">
        <dbReference type="Rhea" id="RHEA:29252"/>
    </physiologicalReaction>
</comment>
<comment type="subcellular location">
    <subcellularLocation>
        <location evidence="1">Cell inner membrane</location>
        <topology evidence="1">Multi-pass membrane protein</topology>
    </subcellularLocation>
</comment>
<comment type="similarity">
    <text evidence="1">Belongs to the NhaA Na(+)/H(+) (TC 2.A.33) antiporter family.</text>
</comment>
<dbReference type="EMBL" id="CP000758">
    <property type="protein sequence ID" value="ABS13246.1"/>
    <property type="molecule type" value="Genomic_DNA"/>
</dbReference>
<dbReference type="RefSeq" id="WP_012090793.1">
    <property type="nucleotide sequence ID" value="NC_009667.1"/>
</dbReference>
<dbReference type="SMR" id="A6WW92"/>
<dbReference type="STRING" id="439375.Oant_0515"/>
<dbReference type="KEGG" id="oan:Oant_0515"/>
<dbReference type="PATRIC" id="fig|439375.7.peg.550"/>
<dbReference type="eggNOG" id="COG3004">
    <property type="taxonomic scope" value="Bacteria"/>
</dbReference>
<dbReference type="HOGENOM" id="CLU_015803_1_0_5"/>
<dbReference type="Proteomes" id="UP000002301">
    <property type="component" value="Chromosome 1"/>
</dbReference>
<dbReference type="GO" id="GO:0005886">
    <property type="term" value="C:plasma membrane"/>
    <property type="evidence" value="ECO:0007669"/>
    <property type="project" value="UniProtKB-SubCell"/>
</dbReference>
<dbReference type="GO" id="GO:0015385">
    <property type="term" value="F:sodium:proton antiporter activity"/>
    <property type="evidence" value="ECO:0007669"/>
    <property type="project" value="TreeGrafter"/>
</dbReference>
<dbReference type="GO" id="GO:0006885">
    <property type="term" value="P:regulation of pH"/>
    <property type="evidence" value="ECO:0007669"/>
    <property type="project" value="InterPro"/>
</dbReference>
<dbReference type="Gene3D" id="1.20.1530.10">
    <property type="entry name" value="Na+/H+ antiporter like domain"/>
    <property type="match status" value="1"/>
</dbReference>
<dbReference type="HAMAP" id="MF_01844">
    <property type="entry name" value="NhaA"/>
    <property type="match status" value="1"/>
</dbReference>
<dbReference type="InterPro" id="IPR023171">
    <property type="entry name" value="Na/H_antiporter_dom_sf"/>
</dbReference>
<dbReference type="InterPro" id="IPR004670">
    <property type="entry name" value="NhaA"/>
</dbReference>
<dbReference type="NCBIfam" id="TIGR00773">
    <property type="entry name" value="NhaA"/>
    <property type="match status" value="1"/>
</dbReference>
<dbReference type="NCBIfam" id="NF007111">
    <property type="entry name" value="PRK09560.1"/>
    <property type="match status" value="1"/>
</dbReference>
<dbReference type="NCBIfam" id="NF007112">
    <property type="entry name" value="PRK09561.1"/>
    <property type="match status" value="1"/>
</dbReference>
<dbReference type="PANTHER" id="PTHR30341:SF0">
    <property type="entry name" value="NA(+)_H(+) ANTIPORTER NHAA"/>
    <property type="match status" value="1"/>
</dbReference>
<dbReference type="PANTHER" id="PTHR30341">
    <property type="entry name" value="SODIUM ION/PROTON ANTIPORTER NHAA-RELATED"/>
    <property type="match status" value="1"/>
</dbReference>
<dbReference type="Pfam" id="PF06965">
    <property type="entry name" value="Na_H_antiport_1"/>
    <property type="match status" value="1"/>
</dbReference>
<name>NHAA1_BRUA4</name>
<evidence type="ECO:0000255" key="1">
    <source>
        <dbReference type="HAMAP-Rule" id="MF_01844"/>
    </source>
</evidence>
<proteinExistence type="inferred from homology"/>